<accession>Q4ZM55</accession>
<comment type="function">
    <text evidence="1">Catalyzes the rearrangement of 1-deoxy-D-xylulose 5-phosphate (DXP) to produce the thiazole phosphate moiety of thiamine. Sulfur is provided by the thiocarboxylate moiety of the carrier protein ThiS. In vitro, sulfur can be provided by H(2)S.</text>
</comment>
<comment type="catalytic activity">
    <reaction evidence="1">
        <text>[ThiS sulfur-carrier protein]-C-terminal-Gly-aminoethanethioate + 2-iminoacetate + 1-deoxy-D-xylulose 5-phosphate = [ThiS sulfur-carrier protein]-C-terminal Gly-Gly + 2-[(2R,5Z)-2-carboxy-4-methylthiazol-5(2H)-ylidene]ethyl phosphate + 2 H2O + H(+)</text>
        <dbReference type="Rhea" id="RHEA:26297"/>
        <dbReference type="Rhea" id="RHEA-COMP:12909"/>
        <dbReference type="Rhea" id="RHEA-COMP:19908"/>
        <dbReference type="ChEBI" id="CHEBI:15377"/>
        <dbReference type="ChEBI" id="CHEBI:15378"/>
        <dbReference type="ChEBI" id="CHEBI:57792"/>
        <dbReference type="ChEBI" id="CHEBI:62899"/>
        <dbReference type="ChEBI" id="CHEBI:77846"/>
        <dbReference type="ChEBI" id="CHEBI:90778"/>
        <dbReference type="ChEBI" id="CHEBI:232372"/>
        <dbReference type="EC" id="2.8.1.10"/>
    </reaction>
</comment>
<comment type="pathway">
    <text evidence="1">Cofactor biosynthesis; thiamine diphosphate biosynthesis.</text>
</comment>
<comment type="subunit">
    <text evidence="1">Homotetramer. Forms heterodimers with either ThiH or ThiS.</text>
</comment>
<comment type="subcellular location">
    <subcellularLocation>
        <location evidence="1">Cytoplasm</location>
    </subcellularLocation>
</comment>
<comment type="similarity">
    <text evidence="1">Belongs to the ThiG family.</text>
</comment>
<sequence>MSNVRSDKPFVLAGRTFESRLLVGTGKYIDMEQTRLAIEASGAEIVTVAVRRTNLGQNPGEPNLLDVLPPDRYTILPNTAGCFDATEAVRTCRLSRELLDGRNLVKLEVLADQKTLFPNVIETLKAAEILVKDGFDVMVYTSDDPIIARQLAEIGCIAIMPLAGLIGSGLGICNPYNLQIILEETKVPVLVDAGVGTASDATIAMELGCEAVLMNSAIAHAQQPVMMAEAMKHAVIAGRLAYLAGRMPRKLYASASSPLDGLIK</sequence>
<feature type="chain" id="PRO_0000236359" description="Thiazole synthase">
    <location>
        <begin position="1"/>
        <end position="264"/>
    </location>
</feature>
<feature type="active site" description="Schiff-base intermediate with DXP" evidence="1">
    <location>
        <position position="106"/>
    </location>
</feature>
<feature type="binding site" evidence="1">
    <location>
        <position position="167"/>
    </location>
    <ligand>
        <name>1-deoxy-D-xylulose 5-phosphate</name>
        <dbReference type="ChEBI" id="CHEBI:57792"/>
    </ligand>
</feature>
<feature type="binding site" evidence="1">
    <location>
        <begin position="193"/>
        <end position="194"/>
    </location>
    <ligand>
        <name>1-deoxy-D-xylulose 5-phosphate</name>
        <dbReference type="ChEBI" id="CHEBI:57792"/>
    </ligand>
</feature>
<feature type="binding site" evidence="1">
    <location>
        <begin position="215"/>
        <end position="216"/>
    </location>
    <ligand>
        <name>1-deoxy-D-xylulose 5-phosphate</name>
        <dbReference type="ChEBI" id="CHEBI:57792"/>
    </ligand>
</feature>
<reference key="1">
    <citation type="journal article" date="2005" name="Proc. Natl. Acad. Sci. U.S.A.">
        <title>Comparison of the complete genome sequences of Pseudomonas syringae pv. syringae B728a and pv. tomato DC3000.</title>
        <authorList>
            <person name="Feil H."/>
            <person name="Feil W.S."/>
            <person name="Chain P."/>
            <person name="Larimer F."/>
            <person name="Dibartolo G."/>
            <person name="Copeland A."/>
            <person name="Lykidis A."/>
            <person name="Trong S."/>
            <person name="Nolan M."/>
            <person name="Goltsman E."/>
            <person name="Thiel J."/>
            <person name="Malfatti S."/>
            <person name="Loper J.E."/>
            <person name="Lapidus A."/>
            <person name="Detter J.C."/>
            <person name="Land M."/>
            <person name="Richardson P.M."/>
            <person name="Kyrpides N.C."/>
            <person name="Ivanova N."/>
            <person name="Lindow S.E."/>
        </authorList>
    </citation>
    <scope>NUCLEOTIDE SEQUENCE [LARGE SCALE GENOMIC DNA]</scope>
    <source>
        <strain>B728a</strain>
    </source>
</reference>
<organism>
    <name type="scientific">Pseudomonas syringae pv. syringae (strain B728a)</name>
    <dbReference type="NCBI Taxonomy" id="205918"/>
    <lineage>
        <taxon>Bacteria</taxon>
        <taxon>Pseudomonadati</taxon>
        <taxon>Pseudomonadota</taxon>
        <taxon>Gammaproteobacteria</taxon>
        <taxon>Pseudomonadales</taxon>
        <taxon>Pseudomonadaceae</taxon>
        <taxon>Pseudomonas</taxon>
        <taxon>Pseudomonas syringae</taxon>
    </lineage>
</organism>
<proteinExistence type="inferred from homology"/>
<dbReference type="EC" id="2.8.1.10" evidence="1"/>
<dbReference type="EMBL" id="CP000075">
    <property type="protein sequence ID" value="AAY39767.1"/>
    <property type="molecule type" value="Genomic_DNA"/>
</dbReference>
<dbReference type="RefSeq" id="WP_003304387.1">
    <property type="nucleotide sequence ID" value="NC_007005.1"/>
</dbReference>
<dbReference type="RefSeq" id="YP_237805.1">
    <property type="nucleotide sequence ID" value="NC_007005.1"/>
</dbReference>
<dbReference type="SMR" id="Q4ZM55"/>
<dbReference type="STRING" id="205918.Psyr_4740"/>
<dbReference type="KEGG" id="psb:Psyr_4740"/>
<dbReference type="PATRIC" id="fig|205918.7.peg.4889"/>
<dbReference type="eggNOG" id="COG2022">
    <property type="taxonomic scope" value="Bacteria"/>
</dbReference>
<dbReference type="HOGENOM" id="CLU_062233_1_1_6"/>
<dbReference type="OrthoDB" id="9805935at2"/>
<dbReference type="UniPathway" id="UPA00060"/>
<dbReference type="Proteomes" id="UP000000426">
    <property type="component" value="Chromosome"/>
</dbReference>
<dbReference type="GO" id="GO:0005737">
    <property type="term" value="C:cytoplasm"/>
    <property type="evidence" value="ECO:0007669"/>
    <property type="project" value="UniProtKB-SubCell"/>
</dbReference>
<dbReference type="GO" id="GO:1990107">
    <property type="term" value="F:thiazole synthase activity"/>
    <property type="evidence" value="ECO:0007669"/>
    <property type="project" value="UniProtKB-EC"/>
</dbReference>
<dbReference type="GO" id="GO:0009229">
    <property type="term" value="P:thiamine diphosphate biosynthetic process"/>
    <property type="evidence" value="ECO:0007669"/>
    <property type="project" value="UniProtKB-UniRule"/>
</dbReference>
<dbReference type="CDD" id="cd04728">
    <property type="entry name" value="ThiG"/>
    <property type="match status" value="1"/>
</dbReference>
<dbReference type="Gene3D" id="3.20.20.70">
    <property type="entry name" value="Aldolase class I"/>
    <property type="match status" value="1"/>
</dbReference>
<dbReference type="HAMAP" id="MF_00443">
    <property type="entry name" value="ThiG"/>
    <property type="match status" value="1"/>
</dbReference>
<dbReference type="InterPro" id="IPR013785">
    <property type="entry name" value="Aldolase_TIM"/>
</dbReference>
<dbReference type="InterPro" id="IPR033983">
    <property type="entry name" value="Thiazole_synthase_ThiG"/>
</dbReference>
<dbReference type="InterPro" id="IPR008867">
    <property type="entry name" value="ThiG"/>
</dbReference>
<dbReference type="PANTHER" id="PTHR34266">
    <property type="entry name" value="THIAZOLE SYNTHASE"/>
    <property type="match status" value="1"/>
</dbReference>
<dbReference type="PANTHER" id="PTHR34266:SF2">
    <property type="entry name" value="THIAZOLE SYNTHASE"/>
    <property type="match status" value="1"/>
</dbReference>
<dbReference type="Pfam" id="PF05690">
    <property type="entry name" value="ThiG"/>
    <property type="match status" value="1"/>
</dbReference>
<dbReference type="SUPFAM" id="SSF110399">
    <property type="entry name" value="ThiG-like"/>
    <property type="match status" value="1"/>
</dbReference>
<gene>
    <name evidence="1" type="primary">thiG</name>
    <name type="ordered locus">Psyr_4740</name>
</gene>
<protein>
    <recommendedName>
        <fullName evidence="1">Thiazole synthase</fullName>
        <ecNumber evidence="1">2.8.1.10</ecNumber>
    </recommendedName>
</protein>
<name>THIG_PSEU2</name>
<evidence type="ECO:0000255" key="1">
    <source>
        <dbReference type="HAMAP-Rule" id="MF_00443"/>
    </source>
</evidence>
<keyword id="KW-0963">Cytoplasm</keyword>
<keyword id="KW-0704">Schiff base</keyword>
<keyword id="KW-0784">Thiamine biosynthesis</keyword>
<keyword id="KW-0808">Transferase</keyword>